<reference key="1">
    <citation type="journal article" date="2005" name="Biochem. J.">
        <title>Characterization of a novel NADP(+)-dependent D-arabitol dehydrogenase from the plant pathogen Uromyces fabae.</title>
        <authorList>
            <person name="Link T."/>
            <person name="Lohaus G."/>
            <person name="Heiser I."/>
            <person name="Mendgen K."/>
            <person name="Hahn M."/>
            <person name="Voegele R.T."/>
        </authorList>
    </citation>
    <scope>NUCLEOTIDE SEQUENCE [GENOMIC DNA]</scope>
    <scope>INDUCTION</scope>
    <scope>CATALYTIC ACTIVITY</scope>
    <scope>COFACTOR</scope>
    <scope>BIOPHYSICOCHEMICAL PROPERTIES</scope>
    <scope>FUNCTION</scope>
</reference>
<feature type="chain" id="PRO_0000418402" description="D-arabinitol dehydrogenase 1">
    <location>
        <begin position="1"/>
        <end position="349"/>
    </location>
</feature>
<feature type="binding site" evidence="1">
    <location>
        <position position="46"/>
    </location>
    <ligand>
        <name>Zn(2+)</name>
        <dbReference type="ChEBI" id="CHEBI:29105"/>
        <label>1</label>
        <note>catalytic</note>
    </ligand>
</feature>
<feature type="binding site" evidence="1">
    <location>
        <position position="67"/>
    </location>
    <ligand>
        <name>Zn(2+)</name>
        <dbReference type="ChEBI" id="CHEBI:29105"/>
        <label>1</label>
        <note>catalytic</note>
    </ligand>
</feature>
<feature type="binding site" evidence="1">
    <location>
        <position position="97"/>
    </location>
    <ligand>
        <name>Zn(2+)</name>
        <dbReference type="ChEBI" id="CHEBI:29105"/>
        <label>2</label>
    </ligand>
</feature>
<feature type="binding site" evidence="1">
    <location>
        <position position="100"/>
    </location>
    <ligand>
        <name>Zn(2+)</name>
        <dbReference type="ChEBI" id="CHEBI:29105"/>
        <label>2</label>
    </ligand>
</feature>
<feature type="binding site" evidence="1">
    <location>
        <position position="103"/>
    </location>
    <ligand>
        <name>Zn(2+)</name>
        <dbReference type="ChEBI" id="CHEBI:29105"/>
        <label>2</label>
    </ligand>
</feature>
<feature type="binding site" evidence="1">
    <location>
        <position position="111"/>
    </location>
    <ligand>
        <name>Zn(2+)</name>
        <dbReference type="ChEBI" id="CHEBI:29105"/>
        <label>2</label>
    </ligand>
</feature>
<feature type="binding site" evidence="1">
    <location>
        <position position="151"/>
    </location>
    <ligand>
        <name>Zn(2+)</name>
        <dbReference type="ChEBI" id="CHEBI:29105"/>
        <label>1</label>
        <note>catalytic</note>
    </ligand>
</feature>
<protein>
    <recommendedName>
        <fullName>D-arabinitol dehydrogenase 1</fullName>
        <ecNumber>1.1.1.287</ecNumber>
    </recommendedName>
    <alternativeName>
        <fullName>NADP-dependent D-arabitol dehydrogenase</fullName>
    </alternativeName>
</protein>
<evidence type="ECO:0000250" key="1"/>
<evidence type="ECO:0000269" key="2">
    <source>
    </source>
</evidence>
<evidence type="ECO:0000305" key="3"/>
<proteinExistence type="evidence at protein level"/>
<keyword id="KW-0119">Carbohydrate metabolism</keyword>
<keyword id="KW-0966">Cell projection</keyword>
<keyword id="KW-0479">Metal-binding</keyword>
<keyword id="KW-0521">NADP</keyword>
<keyword id="KW-0560">Oxidoreductase</keyword>
<keyword id="KW-0843">Virulence</keyword>
<keyword id="KW-0862">Zinc</keyword>
<gene>
    <name type="primary">ARD1</name>
</gene>
<comment type="function">
    <text evidence="2">D-arabinitol dehydrogenase which mostly produces D-arabinitol in haustoria, the appendages of the parasitic fungus that penetrate the host's tissue and draws nutrients from it. D-arabinitol accumulation may serve as a carbohydrate storage compound. D-arabinitol is also capable of quenching reactive oxygen species involved in host plant defense reactions, thus providing protection for the rust fungus during the pathogenic interaction.</text>
</comment>
<comment type="catalytic activity">
    <reaction evidence="2">
        <text>D-arabinitol + NADP(+) = D-xylulose + NADPH + H(+)</text>
        <dbReference type="Rhea" id="RHEA:21276"/>
        <dbReference type="ChEBI" id="CHEBI:15378"/>
        <dbReference type="ChEBI" id="CHEBI:17140"/>
        <dbReference type="ChEBI" id="CHEBI:18333"/>
        <dbReference type="ChEBI" id="CHEBI:57783"/>
        <dbReference type="ChEBI" id="CHEBI:58349"/>
        <dbReference type="EC" id="1.1.1.287"/>
    </reaction>
</comment>
<comment type="catalytic activity">
    <reaction evidence="2">
        <text>D-arabinitol + NADP(+) = D-ribulose + NADPH + H(+)</text>
        <dbReference type="Rhea" id="RHEA:11868"/>
        <dbReference type="ChEBI" id="CHEBI:15378"/>
        <dbReference type="ChEBI" id="CHEBI:17173"/>
        <dbReference type="ChEBI" id="CHEBI:18333"/>
        <dbReference type="ChEBI" id="CHEBI:57783"/>
        <dbReference type="ChEBI" id="CHEBI:58349"/>
        <dbReference type="EC" id="1.1.1.287"/>
    </reaction>
</comment>
<comment type="cofactor">
    <cofactor evidence="1">
        <name>Zn(2+)</name>
        <dbReference type="ChEBI" id="CHEBI:29105"/>
    </cofactor>
    <text evidence="1">Binds 2 Zn(2+) ions per subunit.</text>
</comment>
<comment type="biophysicochemical properties">
    <kinetics>
        <KM evidence="2">706 mM for D-arabinitol</KM>
        <KM evidence="2">150 uM for NADP</KM>
        <Vmax evidence="2">117.0 nmol/min/mg enzyme toward D-arabinitol</Vmax>
        <Vmax evidence="2">97.0 nmol/min/mg enzyme toward NADP</Vmax>
    </kinetics>
    <phDependence>
        <text evidence="2">Optimum pH is 9 for the forward reaction, and 6 for the reverse reaction.</text>
    </phDependence>
</comment>
<comment type="subcellular location">
    <subcellularLocation>
        <location>Cell projection</location>
    </subcellularLocation>
    <text>Localizes in the lumen of haustoria.</text>
</comment>
<comment type="induction">
    <text evidence="2">Expressed at all stages of early rust development (spores, germlings and infection structures developed on an artificial surface), with highest transcript levels present in haustoria.</text>
</comment>
<comment type="similarity">
    <text evidence="3">Belongs to the zinc-containing alcohol dehydrogenase family.</text>
</comment>
<organism>
    <name type="scientific">Uromyces fabae</name>
    <name type="common">Rust fungus</name>
    <dbReference type="NCBI Taxonomy" id="55588"/>
    <lineage>
        <taxon>Eukaryota</taxon>
        <taxon>Fungi</taxon>
        <taxon>Dikarya</taxon>
        <taxon>Basidiomycota</taxon>
        <taxon>Pucciniomycotina</taxon>
        <taxon>Pucciniomycetes</taxon>
        <taxon>Pucciniales</taxon>
        <taxon>Pucciniaceae</taxon>
        <taxon>Uromyces</taxon>
    </lineage>
</organism>
<sequence length="349" mass="38372">MATQTLPAQMTALYYEKPRDFSIIKADVPLIDHDEVLLKVSMCGVCGTDQHIHEGEFIAKFPLIPGHEVIGTIVLAGNQVENVKVGDRVVCDVSETCHKCFFCQRGTPLFCESFEAHGVTLNGGFAEYAKFRAAKVFPIKNLTDEQATLVEPASCAVHGLDKIRPKPGSECLLIGAGPTGLMLAQLLKLNGAQRVVLAANKGMKMDIARKINAADEYIDLDRKDAANQWAQLKEDNPHGFDVVVEATGVESIVNDSINYVRRGGTLLVYGVYDNAARVTWSPTKIFQDEINIVGSFAQIHCFPRAVAYLESGKIRTDGMVTHVYKIEEYQEALDKMASRQCLKIAVKPN</sequence>
<accession>Q4R0J7</accession>
<name>ARD1_UROFA</name>
<dbReference type="EC" id="1.1.1.287"/>
<dbReference type="EMBL" id="AJ809335">
    <property type="protein sequence ID" value="CAH10835.1"/>
    <property type="molecule type" value="Genomic_DNA"/>
</dbReference>
<dbReference type="SMR" id="Q4R0J7"/>
<dbReference type="KEGG" id="ag:CAH10835"/>
<dbReference type="BRENDA" id="1.1.1.287">
    <property type="organism ID" value="6579"/>
</dbReference>
<dbReference type="SABIO-RK" id="Q4R0J7"/>
<dbReference type="GO" id="GO:0042995">
    <property type="term" value="C:cell projection"/>
    <property type="evidence" value="ECO:0007669"/>
    <property type="project" value="UniProtKB-SubCell"/>
</dbReference>
<dbReference type="GO" id="GO:0033709">
    <property type="term" value="F:D-arabinitol dehydrogenase (NADP+) activity"/>
    <property type="evidence" value="ECO:0000314"/>
    <property type="project" value="UniProtKB"/>
</dbReference>
<dbReference type="GO" id="GO:0008270">
    <property type="term" value="F:zinc ion binding"/>
    <property type="evidence" value="ECO:0007669"/>
    <property type="project" value="InterPro"/>
</dbReference>
<dbReference type="CDD" id="cd08234">
    <property type="entry name" value="threonine_DH_like"/>
    <property type="match status" value="1"/>
</dbReference>
<dbReference type="FunFam" id="3.40.50.720:FF:000843">
    <property type="entry name" value="D-arabinitol dehydrogenase 1"/>
    <property type="match status" value="1"/>
</dbReference>
<dbReference type="Gene3D" id="3.90.180.10">
    <property type="entry name" value="Medium-chain alcohol dehydrogenases, catalytic domain"/>
    <property type="match status" value="1"/>
</dbReference>
<dbReference type="Gene3D" id="3.40.50.720">
    <property type="entry name" value="NAD(P)-binding Rossmann-like Domain"/>
    <property type="match status" value="1"/>
</dbReference>
<dbReference type="InterPro" id="IPR013149">
    <property type="entry name" value="ADH-like_C"/>
</dbReference>
<dbReference type="InterPro" id="IPR013154">
    <property type="entry name" value="ADH-like_N"/>
</dbReference>
<dbReference type="InterPro" id="IPR002328">
    <property type="entry name" value="ADH_Zn_CS"/>
</dbReference>
<dbReference type="InterPro" id="IPR011032">
    <property type="entry name" value="GroES-like_sf"/>
</dbReference>
<dbReference type="InterPro" id="IPR036291">
    <property type="entry name" value="NAD(P)-bd_dom_sf"/>
</dbReference>
<dbReference type="InterPro" id="IPR050129">
    <property type="entry name" value="Zn_alcohol_dh"/>
</dbReference>
<dbReference type="PANTHER" id="PTHR43401">
    <property type="entry name" value="L-THREONINE 3-DEHYDROGENASE"/>
    <property type="match status" value="1"/>
</dbReference>
<dbReference type="PANTHER" id="PTHR43401:SF2">
    <property type="entry name" value="L-THREONINE 3-DEHYDROGENASE"/>
    <property type="match status" value="1"/>
</dbReference>
<dbReference type="Pfam" id="PF08240">
    <property type="entry name" value="ADH_N"/>
    <property type="match status" value="1"/>
</dbReference>
<dbReference type="Pfam" id="PF00107">
    <property type="entry name" value="ADH_zinc_N"/>
    <property type="match status" value="1"/>
</dbReference>
<dbReference type="SUPFAM" id="SSF50129">
    <property type="entry name" value="GroES-like"/>
    <property type="match status" value="1"/>
</dbReference>
<dbReference type="SUPFAM" id="SSF51735">
    <property type="entry name" value="NAD(P)-binding Rossmann-fold domains"/>
    <property type="match status" value="1"/>
</dbReference>
<dbReference type="PROSITE" id="PS00059">
    <property type="entry name" value="ADH_ZINC"/>
    <property type="match status" value="1"/>
</dbReference>